<proteinExistence type="inferred from homology"/>
<protein>
    <recommendedName>
        <fullName evidence="1">6,7-dimethyl-8-ribityllumazine synthase</fullName>
        <shortName evidence="1">DMRL synthase</shortName>
        <shortName evidence="1">LS</shortName>
        <shortName evidence="1">Lumazine synthase</shortName>
        <ecNumber evidence="1">2.5.1.78</ecNumber>
    </recommendedName>
</protein>
<name>RISB_STRAW</name>
<evidence type="ECO:0000255" key="1">
    <source>
        <dbReference type="HAMAP-Rule" id="MF_00178"/>
    </source>
</evidence>
<keyword id="KW-1185">Reference proteome</keyword>
<keyword id="KW-0686">Riboflavin biosynthesis</keyword>
<keyword id="KW-0808">Transferase</keyword>
<feature type="chain" id="PRO_0000134815" description="6,7-dimethyl-8-ribityllumazine synthase">
    <location>
        <begin position="1"/>
        <end position="161"/>
    </location>
</feature>
<feature type="active site" description="Proton donor" evidence="1">
    <location>
        <position position="89"/>
    </location>
</feature>
<feature type="binding site" evidence="1">
    <location>
        <position position="26"/>
    </location>
    <ligand>
        <name>5-amino-6-(D-ribitylamino)uracil</name>
        <dbReference type="ChEBI" id="CHEBI:15934"/>
    </ligand>
</feature>
<feature type="binding site" evidence="1">
    <location>
        <begin position="58"/>
        <end position="60"/>
    </location>
    <ligand>
        <name>5-amino-6-(D-ribitylamino)uracil</name>
        <dbReference type="ChEBI" id="CHEBI:15934"/>
    </ligand>
</feature>
<feature type="binding site" evidence="1">
    <location>
        <begin position="81"/>
        <end position="83"/>
    </location>
    <ligand>
        <name>5-amino-6-(D-ribitylamino)uracil</name>
        <dbReference type="ChEBI" id="CHEBI:15934"/>
    </ligand>
</feature>
<feature type="binding site" evidence="1">
    <location>
        <begin position="86"/>
        <end position="87"/>
    </location>
    <ligand>
        <name>(2S)-2-hydroxy-3-oxobutyl phosphate</name>
        <dbReference type="ChEBI" id="CHEBI:58830"/>
    </ligand>
</feature>
<feature type="binding site" evidence="1">
    <location>
        <position position="114"/>
    </location>
    <ligand>
        <name>5-amino-6-(D-ribitylamino)uracil</name>
        <dbReference type="ChEBI" id="CHEBI:15934"/>
    </ligand>
</feature>
<feature type="binding site" evidence="1">
    <location>
        <position position="128"/>
    </location>
    <ligand>
        <name>(2S)-2-hydroxy-3-oxobutyl phosphate</name>
        <dbReference type="ChEBI" id="CHEBI:58830"/>
    </ligand>
</feature>
<dbReference type="EC" id="2.5.1.78" evidence="1"/>
<dbReference type="EMBL" id="BA000030">
    <property type="protein sequence ID" value="BAC74616.1"/>
    <property type="molecule type" value="Genomic_DNA"/>
</dbReference>
<dbReference type="RefSeq" id="WP_010988303.1">
    <property type="nucleotide sequence ID" value="NZ_JZJK01000082.1"/>
</dbReference>
<dbReference type="SMR" id="Q827L9"/>
<dbReference type="GeneID" id="41543979"/>
<dbReference type="KEGG" id="sma:SAVERM_6905"/>
<dbReference type="eggNOG" id="COG0054">
    <property type="taxonomic scope" value="Bacteria"/>
</dbReference>
<dbReference type="HOGENOM" id="CLU_089358_1_2_11"/>
<dbReference type="OrthoDB" id="9809709at2"/>
<dbReference type="UniPathway" id="UPA00275">
    <property type="reaction ID" value="UER00404"/>
</dbReference>
<dbReference type="Proteomes" id="UP000000428">
    <property type="component" value="Chromosome"/>
</dbReference>
<dbReference type="GO" id="GO:0005829">
    <property type="term" value="C:cytosol"/>
    <property type="evidence" value="ECO:0007669"/>
    <property type="project" value="TreeGrafter"/>
</dbReference>
<dbReference type="GO" id="GO:0009349">
    <property type="term" value="C:riboflavin synthase complex"/>
    <property type="evidence" value="ECO:0007669"/>
    <property type="project" value="InterPro"/>
</dbReference>
<dbReference type="GO" id="GO:0000906">
    <property type="term" value="F:6,7-dimethyl-8-ribityllumazine synthase activity"/>
    <property type="evidence" value="ECO:0007669"/>
    <property type="project" value="UniProtKB-UniRule"/>
</dbReference>
<dbReference type="GO" id="GO:0009231">
    <property type="term" value="P:riboflavin biosynthetic process"/>
    <property type="evidence" value="ECO:0007669"/>
    <property type="project" value="UniProtKB-UniRule"/>
</dbReference>
<dbReference type="CDD" id="cd09209">
    <property type="entry name" value="Lumazine_synthase-I"/>
    <property type="match status" value="1"/>
</dbReference>
<dbReference type="FunFam" id="3.40.50.960:FF:000002">
    <property type="entry name" value="6,7-dimethyl-8-ribityllumazine synthase"/>
    <property type="match status" value="1"/>
</dbReference>
<dbReference type="Gene3D" id="3.40.50.960">
    <property type="entry name" value="Lumazine/riboflavin synthase"/>
    <property type="match status" value="1"/>
</dbReference>
<dbReference type="HAMAP" id="MF_00178">
    <property type="entry name" value="Lumazine_synth"/>
    <property type="match status" value="1"/>
</dbReference>
<dbReference type="InterPro" id="IPR034964">
    <property type="entry name" value="LS"/>
</dbReference>
<dbReference type="InterPro" id="IPR002180">
    <property type="entry name" value="LS/RS"/>
</dbReference>
<dbReference type="InterPro" id="IPR036467">
    <property type="entry name" value="LS/RS_sf"/>
</dbReference>
<dbReference type="NCBIfam" id="TIGR00114">
    <property type="entry name" value="lumazine-synth"/>
    <property type="match status" value="1"/>
</dbReference>
<dbReference type="PANTHER" id="PTHR21058:SF0">
    <property type="entry name" value="6,7-DIMETHYL-8-RIBITYLLUMAZINE SYNTHASE"/>
    <property type="match status" value="1"/>
</dbReference>
<dbReference type="PANTHER" id="PTHR21058">
    <property type="entry name" value="6,7-DIMETHYL-8-RIBITYLLUMAZINE SYNTHASE DMRL SYNTHASE LUMAZINE SYNTHASE"/>
    <property type="match status" value="1"/>
</dbReference>
<dbReference type="Pfam" id="PF00885">
    <property type="entry name" value="DMRL_synthase"/>
    <property type="match status" value="1"/>
</dbReference>
<dbReference type="SUPFAM" id="SSF52121">
    <property type="entry name" value="Lumazine synthase"/>
    <property type="match status" value="1"/>
</dbReference>
<accession>Q827L9</accession>
<gene>
    <name evidence="1" type="primary">ribH</name>
    <name type="ordered locus">SAV_6905</name>
</gene>
<comment type="function">
    <text evidence="1">Catalyzes the formation of 6,7-dimethyl-8-ribityllumazine by condensation of 5-amino-6-(D-ribitylamino)uracil with 3,4-dihydroxy-2-butanone 4-phosphate. This is the penultimate step in the biosynthesis of riboflavin.</text>
</comment>
<comment type="catalytic activity">
    <reaction evidence="1">
        <text>(2S)-2-hydroxy-3-oxobutyl phosphate + 5-amino-6-(D-ribitylamino)uracil = 6,7-dimethyl-8-(1-D-ribityl)lumazine + phosphate + 2 H2O + H(+)</text>
        <dbReference type="Rhea" id="RHEA:26152"/>
        <dbReference type="ChEBI" id="CHEBI:15377"/>
        <dbReference type="ChEBI" id="CHEBI:15378"/>
        <dbReference type="ChEBI" id="CHEBI:15934"/>
        <dbReference type="ChEBI" id="CHEBI:43474"/>
        <dbReference type="ChEBI" id="CHEBI:58201"/>
        <dbReference type="ChEBI" id="CHEBI:58830"/>
        <dbReference type="EC" id="2.5.1.78"/>
    </reaction>
</comment>
<comment type="pathway">
    <text evidence="1">Cofactor biosynthesis; riboflavin biosynthesis; riboflavin from 2-hydroxy-3-oxobutyl phosphate and 5-amino-6-(D-ribitylamino)uracil: step 1/2.</text>
</comment>
<comment type="similarity">
    <text evidence="1">Belongs to the DMRL synthase family.</text>
</comment>
<sequence>MSGKGAPELSVRNCGDLRVAVIAAQWHEKVMDGLVDGALRALHELGIDEPTLLRVPGSFELPVVAKVLAGRGYDAIVALGVVIRGGTPHFDFVCQGVTQGLTQVSVDTGVPVGFGVLTCDTEEQALDRAGIEGSHEDKGHEAVTAAVATAATLRSVSEPWR</sequence>
<organism>
    <name type="scientific">Streptomyces avermitilis (strain ATCC 31267 / DSM 46492 / JCM 5070 / NBRC 14893 / NCIMB 12804 / NRRL 8165 / MA-4680)</name>
    <dbReference type="NCBI Taxonomy" id="227882"/>
    <lineage>
        <taxon>Bacteria</taxon>
        <taxon>Bacillati</taxon>
        <taxon>Actinomycetota</taxon>
        <taxon>Actinomycetes</taxon>
        <taxon>Kitasatosporales</taxon>
        <taxon>Streptomycetaceae</taxon>
        <taxon>Streptomyces</taxon>
    </lineage>
</organism>
<reference key="1">
    <citation type="journal article" date="2001" name="Proc. Natl. Acad. Sci. U.S.A.">
        <title>Genome sequence of an industrial microorganism Streptomyces avermitilis: deducing the ability of producing secondary metabolites.</title>
        <authorList>
            <person name="Omura S."/>
            <person name="Ikeda H."/>
            <person name="Ishikawa J."/>
            <person name="Hanamoto A."/>
            <person name="Takahashi C."/>
            <person name="Shinose M."/>
            <person name="Takahashi Y."/>
            <person name="Horikawa H."/>
            <person name="Nakazawa H."/>
            <person name="Osonoe T."/>
            <person name="Kikuchi H."/>
            <person name="Shiba T."/>
            <person name="Sakaki Y."/>
            <person name="Hattori M."/>
        </authorList>
    </citation>
    <scope>NUCLEOTIDE SEQUENCE [LARGE SCALE GENOMIC DNA]</scope>
    <source>
        <strain>ATCC 31267 / DSM 46492 / JCM 5070 / NBRC 14893 / NCIMB 12804 / NRRL 8165 / MA-4680</strain>
    </source>
</reference>
<reference key="2">
    <citation type="journal article" date="2003" name="Nat. Biotechnol.">
        <title>Complete genome sequence and comparative analysis of the industrial microorganism Streptomyces avermitilis.</title>
        <authorList>
            <person name="Ikeda H."/>
            <person name="Ishikawa J."/>
            <person name="Hanamoto A."/>
            <person name="Shinose M."/>
            <person name="Kikuchi H."/>
            <person name="Shiba T."/>
            <person name="Sakaki Y."/>
            <person name="Hattori M."/>
            <person name="Omura S."/>
        </authorList>
    </citation>
    <scope>NUCLEOTIDE SEQUENCE [LARGE SCALE GENOMIC DNA]</scope>
    <source>
        <strain>ATCC 31267 / DSM 46492 / JCM 5070 / NBRC 14893 / NCIMB 12804 / NRRL 8165 / MA-4680</strain>
    </source>
</reference>